<gene>
    <name evidence="1" type="primary">gltX2</name>
    <name type="ordered locus">RrIowa_1141</name>
</gene>
<feature type="chain" id="PRO_0000367761" description="Glutamate--tRNA ligase 2">
    <location>
        <begin position="1"/>
        <end position="513"/>
    </location>
</feature>
<feature type="short sequence motif" description="'HIGH' region" evidence="1">
    <location>
        <begin position="11"/>
        <end position="21"/>
    </location>
</feature>
<feature type="short sequence motif" description="'KMSKS' region" evidence="1">
    <location>
        <begin position="240"/>
        <end position="244"/>
    </location>
</feature>
<feature type="binding site" evidence="1">
    <location>
        <position position="243"/>
    </location>
    <ligand>
        <name>ATP</name>
        <dbReference type="ChEBI" id="CHEBI:30616"/>
    </ligand>
</feature>
<reference key="1">
    <citation type="journal article" date="2008" name="Infect. Immun.">
        <title>Genomic comparison of virulent Rickettsia rickettsii Sheila Smith and avirulent Rickettsia rickettsii Iowa.</title>
        <authorList>
            <person name="Ellison D.W."/>
            <person name="Clark T.R."/>
            <person name="Sturdevant D.E."/>
            <person name="Virtaneva K."/>
            <person name="Porcella S.F."/>
            <person name="Hackstadt T."/>
        </authorList>
    </citation>
    <scope>NUCLEOTIDE SEQUENCE [LARGE SCALE GENOMIC DNA]</scope>
    <source>
        <strain>Iowa</strain>
    </source>
</reference>
<dbReference type="EC" id="6.1.1.17" evidence="1"/>
<dbReference type="EMBL" id="CP000766">
    <property type="protein sequence ID" value="ABY72927.1"/>
    <property type="molecule type" value="Genomic_DNA"/>
</dbReference>
<dbReference type="SMR" id="B0BUL7"/>
<dbReference type="KEGG" id="rrj:RrIowa_1141"/>
<dbReference type="eggNOG" id="COG0008">
    <property type="taxonomic scope" value="Bacteria"/>
</dbReference>
<dbReference type="HOGENOM" id="CLU_015768_6_3_5"/>
<dbReference type="Proteomes" id="UP000000796">
    <property type="component" value="Chromosome"/>
</dbReference>
<dbReference type="GO" id="GO:0005829">
    <property type="term" value="C:cytosol"/>
    <property type="evidence" value="ECO:0007669"/>
    <property type="project" value="TreeGrafter"/>
</dbReference>
<dbReference type="GO" id="GO:0005524">
    <property type="term" value="F:ATP binding"/>
    <property type="evidence" value="ECO:0007669"/>
    <property type="project" value="UniProtKB-UniRule"/>
</dbReference>
<dbReference type="GO" id="GO:0004818">
    <property type="term" value="F:glutamate-tRNA ligase activity"/>
    <property type="evidence" value="ECO:0007669"/>
    <property type="project" value="UniProtKB-UniRule"/>
</dbReference>
<dbReference type="GO" id="GO:0000049">
    <property type="term" value="F:tRNA binding"/>
    <property type="evidence" value="ECO:0007669"/>
    <property type="project" value="InterPro"/>
</dbReference>
<dbReference type="GO" id="GO:0008270">
    <property type="term" value="F:zinc ion binding"/>
    <property type="evidence" value="ECO:0007669"/>
    <property type="project" value="InterPro"/>
</dbReference>
<dbReference type="GO" id="GO:0006424">
    <property type="term" value="P:glutamyl-tRNA aminoacylation"/>
    <property type="evidence" value="ECO:0007669"/>
    <property type="project" value="UniProtKB-UniRule"/>
</dbReference>
<dbReference type="CDD" id="cd00808">
    <property type="entry name" value="GluRS_core"/>
    <property type="match status" value="1"/>
</dbReference>
<dbReference type="FunFam" id="3.40.50.620:FF:000007">
    <property type="entry name" value="Glutamate--tRNA ligase"/>
    <property type="match status" value="1"/>
</dbReference>
<dbReference type="Gene3D" id="1.10.10.350">
    <property type="match status" value="1"/>
</dbReference>
<dbReference type="Gene3D" id="3.40.50.620">
    <property type="entry name" value="HUPs"/>
    <property type="match status" value="1"/>
</dbReference>
<dbReference type="HAMAP" id="MF_00022">
    <property type="entry name" value="Glu_tRNA_synth_type1"/>
    <property type="match status" value="1"/>
</dbReference>
<dbReference type="InterPro" id="IPR045462">
    <property type="entry name" value="aa-tRNA-synth_I_cd-bd"/>
</dbReference>
<dbReference type="InterPro" id="IPR020751">
    <property type="entry name" value="aa-tRNA-synth_I_codon-bd_sub2"/>
</dbReference>
<dbReference type="InterPro" id="IPR008925">
    <property type="entry name" value="aa_tRNA-synth_I_cd-bd_sf"/>
</dbReference>
<dbReference type="InterPro" id="IPR004527">
    <property type="entry name" value="Glu-tRNA-ligase_bac/mito"/>
</dbReference>
<dbReference type="InterPro" id="IPR000924">
    <property type="entry name" value="Glu/Gln-tRNA-synth"/>
</dbReference>
<dbReference type="InterPro" id="IPR020058">
    <property type="entry name" value="Glu/Gln-tRNA-synth_Ib_cat-dom"/>
</dbReference>
<dbReference type="InterPro" id="IPR049940">
    <property type="entry name" value="GluQ/Sye"/>
</dbReference>
<dbReference type="InterPro" id="IPR033910">
    <property type="entry name" value="GluRS_core"/>
</dbReference>
<dbReference type="InterPro" id="IPR014729">
    <property type="entry name" value="Rossmann-like_a/b/a_fold"/>
</dbReference>
<dbReference type="InterPro" id="IPR005728">
    <property type="entry name" value="RPE1"/>
</dbReference>
<dbReference type="NCBIfam" id="TIGR00464">
    <property type="entry name" value="gltX_bact"/>
    <property type="match status" value="1"/>
</dbReference>
<dbReference type="NCBIfam" id="TIGR01045">
    <property type="entry name" value="RPE1"/>
    <property type="match status" value="1"/>
</dbReference>
<dbReference type="PANTHER" id="PTHR43311">
    <property type="entry name" value="GLUTAMATE--TRNA LIGASE"/>
    <property type="match status" value="1"/>
</dbReference>
<dbReference type="PANTHER" id="PTHR43311:SF2">
    <property type="entry name" value="GLUTAMATE--TRNA LIGASE, MITOCHONDRIAL-RELATED"/>
    <property type="match status" value="1"/>
</dbReference>
<dbReference type="Pfam" id="PF19269">
    <property type="entry name" value="Anticodon_2"/>
    <property type="match status" value="1"/>
</dbReference>
<dbReference type="Pfam" id="PF00749">
    <property type="entry name" value="tRNA-synt_1c"/>
    <property type="match status" value="1"/>
</dbReference>
<dbReference type="PRINTS" id="PR00987">
    <property type="entry name" value="TRNASYNTHGLU"/>
</dbReference>
<dbReference type="SUPFAM" id="SSF48163">
    <property type="entry name" value="An anticodon-binding domain of class I aminoacyl-tRNA synthetases"/>
    <property type="match status" value="1"/>
</dbReference>
<dbReference type="SUPFAM" id="SSF52374">
    <property type="entry name" value="Nucleotidylyl transferase"/>
    <property type="match status" value="1"/>
</dbReference>
<proteinExistence type="inferred from homology"/>
<organism>
    <name type="scientific">Rickettsia rickettsii (strain Iowa)</name>
    <dbReference type="NCBI Taxonomy" id="452659"/>
    <lineage>
        <taxon>Bacteria</taxon>
        <taxon>Pseudomonadati</taxon>
        <taxon>Pseudomonadota</taxon>
        <taxon>Alphaproteobacteria</taxon>
        <taxon>Rickettsiales</taxon>
        <taxon>Rickettsiaceae</taxon>
        <taxon>Rickettsieae</taxon>
        <taxon>Rickettsia</taxon>
        <taxon>spotted fever group</taxon>
    </lineage>
</organism>
<keyword id="KW-0030">Aminoacyl-tRNA synthetase</keyword>
<keyword id="KW-0067">ATP-binding</keyword>
<keyword id="KW-0963">Cytoplasm</keyword>
<keyword id="KW-0436">Ligase</keyword>
<keyword id="KW-0547">Nucleotide-binding</keyword>
<keyword id="KW-0648">Protein biosynthesis</keyword>
<comment type="function">
    <text evidence="1">Catalyzes the attachment of glutamate to tRNA(Glu) in a two-step reaction: glutamate is first activated by ATP to form Glu-AMP and then transferred to the acceptor end of tRNA(Glu).</text>
</comment>
<comment type="catalytic activity">
    <reaction evidence="1">
        <text>tRNA(Glu) + L-glutamate + ATP = L-glutamyl-tRNA(Glu) + AMP + diphosphate</text>
        <dbReference type="Rhea" id="RHEA:23540"/>
        <dbReference type="Rhea" id="RHEA-COMP:9663"/>
        <dbReference type="Rhea" id="RHEA-COMP:9680"/>
        <dbReference type="ChEBI" id="CHEBI:29985"/>
        <dbReference type="ChEBI" id="CHEBI:30616"/>
        <dbReference type="ChEBI" id="CHEBI:33019"/>
        <dbReference type="ChEBI" id="CHEBI:78442"/>
        <dbReference type="ChEBI" id="CHEBI:78520"/>
        <dbReference type="ChEBI" id="CHEBI:456215"/>
        <dbReference type="EC" id="6.1.1.17"/>
    </reaction>
</comment>
<comment type="subunit">
    <text evidence="1">Monomer.</text>
</comment>
<comment type="subcellular location">
    <subcellularLocation>
        <location evidence="1">Cytoplasm</location>
    </subcellularLocation>
</comment>
<comment type="similarity">
    <text evidence="1">Belongs to the class-I aminoacyl-tRNA synthetase family. Glutamate--tRNA ligase type 1 subfamily.</text>
</comment>
<sequence length="513" mass="58370">MNNNVITRFAPSPTGFLHIGSARTALFNYLFARHHNGKFLLRIEDTDKERSTKEAVEAIFSGLKWLGLDWNGEVIFQSKRNNLYKEAALKLLQNGKAYYCFTRQEEIERQRQQALENKQHFIFNSEWRDKDPSIYPTDIKPVIRLKTPREGSITIHDTLQGEVVIENSHIDDMVLLRADGTATYMLAVVVDDHDMGITHIIRGNDHLTNAARQLAIYQAFGYAVPSMTHIPLIHGADGAKLSKRHGALGIEAYKDMGYLPESLCNYLLRLGWSHGDDEIISMTQAIDWFNLDSLGKSPAKLDFAKMNSLNSHYLRMLDNDSLTSKIVEILEQNYNKLLQKLAYREEFGGNTERSTAAYIDIREDASTGLTYKLPLAVELPKKFKVSEQEIGYIKQAMPSLLVRSETLLELTRLAQIYLVDSPIIYSQDSKEIIENCDKNLIKQIIENLSELEQFDKESVQNKFKEIAAANDLKLNDIMKPVRALITGMTASPSVFEIAEILGKENILKRLKII</sequence>
<evidence type="ECO:0000255" key="1">
    <source>
        <dbReference type="HAMAP-Rule" id="MF_00022"/>
    </source>
</evidence>
<name>SYE2_RICRO</name>
<accession>B0BUL7</accession>
<protein>
    <recommendedName>
        <fullName evidence="1">Glutamate--tRNA ligase 2</fullName>
        <ecNumber evidence="1">6.1.1.17</ecNumber>
    </recommendedName>
    <alternativeName>
        <fullName evidence="1">Glutamyl-tRNA synthetase 2</fullName>
        <shortName evidence="1">GluRS 2</shortName>
    </alternativeName>
</protein>